<accession>Q985W1</accession>
<gene>
    <name evidence="1" type="primary">rnhA</name>
    <name type="ordered locus">mlr7504</name>
</gene>
<evidence type="ECO:0000255" key="1">
    <source>
        <dbReference type="HAMAP-Rule" id="MF_00042"/>
    </source>
</evidence>
<evidence type="ECO:0000255" key="2">
    <source>
        <dbReference type="PROSITE-ProRule" id="PRU00408"/>
    </source>
</evidence>
<evidence type="ECO:0000256" key="3">
    <source>
        <dbReference type="SAM" id="MobiDB-lite"/>
    </source>
</evidence>
<name>RNH_RHILO</name>
<protein>
    <recommendedName>
        <fullName evidence="1">Ribonuclease H</fullName>
        <shortName evidence="1">RNase H</shortName>
        <ecNumber evidence="1">3.1.26.4</ecNumber>
    </recommendedName>
</protein>
<sequence length="177" mass="19458">MSKQVEIFTDGACSGNPGPGGWGAILRFNGTTKELSGGEAETTNNRMELLAAISALNALKEPCTVELHTDSKYVMDGISKWIHGWKKNGWKTADKKPVKNGELWQALDEANRRHKVTWNWVKGHAGHTENERADELAREGMAPFKKGSFKPAASAPKPDAQLKQPVATKARRSTQSY</sequence>
<comment type="function">
    <text evidence="1">Endonuclease that specifically degrades the RNA of RNA-DNA hybrids.</text>
</comment>
<comment type="catalytic activity">
    <reaction evidence="1">
        <text>Endonucleolytic cleavage to 5'-phosphomonoester.</text>
        <dbReference type="EC" id="3.1.26.4"/>
    </reaction>
</comment>
<comment type="cofactor">
    <cofactor evidence="1">
        <name>Mg(2+)</name>
        <dbReference type="ChEBI" id="CHEBI:18420"/>
    </cofactor>
    <text evidence="1">Binds 1 Mg(2+) ion per subunit. May bind a second metal ion at a regulatory site, or after substrate binding.</text>
</comment>
<comment type="subunit">
    <text evidence="1">Monomer.</text>
</comment>
<comment type="subcellular location">
    <subcellularLocation>
        <location evidence="1">Cytoplasm</location>
    </subcellularLocation>
</comment>
<comment type="similarity">
    <text evidence="1">Belongs to the RNase H family.</text>
</comment>
<organism>
    <name type="scientific">Mesorhizobium japonicum (strain LMG 29417 / CECT 9101 / MAFF 303099)</name>
    <name type="common">Mesorhizobium loti (strain MAFF 303099)</name>
    <dbReference type="NCBI Taxonomy" id="266835"/>
    <lineage>
        <taxon>Bacteria</taxon>
        <taxon>Pseudomonadati</taxon>
        <taxon>Pseudomonadota</taxon>
        <taxon>Alphaproteobacteria</taxon>
        <taxon>Hyphomicrobiales</taxon>
        <taxon>Phyllobacteriaceae</taxon>
        <taxon>Mesorhizobium</taxon>
    </lineage>
</organism>
<keyword id="KW-0963">Cytoplasm</keyword>
<keyword id="KW-0255">Endonuclease</keyword>
<keyword id="KW-0378">Hydrolase</keyword>
<keyword id="KW-0460">Magnesium</keyword>
<keyword id="KW-0479">Metal-binding</keyword>
<keyword id="KW-0540">Nuclease</keyword>
<feature type="chain" id="PRO_0000195393" description="Ribonuclease H">
    <location>
        <begin position="1"/>
        <end position="177"/>
    </location>
</feature>
<feature type="domain" description="RNase H type-1" evidence="2">
    <location>
        <begin position="1"/>
        <end position="142"/>
    </location>
</feature>
<feature type="region of interest" description="Disordered" evidence="3">
    <location>
        <begin position="126"/>
        <end position="177"/>
    </location>
</feature>
<feature type="compositionally biased region" description="Basic and acidic residues" evidence="3">
    <location>
        <begin position="126"/>
        <end position="138"/>
    </location>
</feature>
<feature type="binding site" evidence="1">
    <location>
        <position position="10"/>
    </location>
    <ligand>
        <name>Mg(2+)</name>
        <dbReference type="ChEBI" id="CHEBI:18420"/>
        <label>1</label>
    </ligand>
</feature>
<feature type="binding site" evidence="1">
    <location>
        <position position="10"/>
    </location>
    <ligand>
        <name>Mg(2+)</name>
        <dbReference type="ChEBI" id="CHEBI:18420"/>
        <label>2</label>
    </ligand>
</feature>
<feature type="binding site" evidence="1">
    <location>
        <position position="48"/>
    </location>
    <ligand>
        <name>Mg(2+)</name>
        <dbReference type="ChEBI" id="CHEBI:18420"/>
        <label>1</label>
    </ligand>
</feature>
<feature type="binding site" evidence="1">
    <location>
        <position position="70"/>
    </location>
    <ligand>
        <name>Mg(2+)</name>
        <dbReference type="ChEBI" id="CHEBI:18420"/>
        <label>1</label>
    </ligand>
</feature>
<feature type="binding site" evidence="1">
    <location>
        <position position="134"/>
    </location>
    <ligand>
        <name>Mg(2+)</name>
        <dbReference type="ChEBI" id="CHEBI:18420"/>
        <label>2</label>
    </ligand>
</feature>
<dbReference type="EC" id="3.1.26.4" evidence="1"/>
<dbReference type="EMBL" id="BA000012">
    <property type="protein sequence ID" value="BAB53592.1"/>
    <property type="molecule type" value="Genomic_DNA"/>
</dbReference>
<dbReference type="RefSeq" id="WP_010914899.1">
    <property type="nucleotide sequence ID" value="NC_002678.2"/>
</dbReference>
<dbReference type="SMR" id="Q985W1"/>
<dbReference type="GeneID" id="66685227"/>
<dbReference type="KEGG" id="mlo:mlr7504"/>
<dbReference type="eggNOG" id="COG0328">
    <property type="taxonomic scope" value="Bacteria"/>
</dbReference>
<dbReference type="HOGENOM" id="CLU_030894_6_0_5"/>
<dbReference type="Proteomes" id="UP000000552">
    <property type="component" value="Chromosome"/>
</dbReference>
<dbReference type="GO" id="GO:0005737">
    <property type="term" value="C:cytoplasm"/>
    <property type="evidence" value="ECO:0007669"/>
    <property type="project" value="UniProtKB-SubCell"/>
</dbReference>
<dbReference type="GO" id="GO:0000287">
    <property type="term" value="F:magnesium ion binding"/>
    <property type="evidence" value="ECO:0007669"/>
    <property type="project" value="UniProtKB-UniRule"/>
</dbReference>
<dbReference type="GO" id="GO:0003676">
    <property type="term" value="F:nucleic acid binding"/>
    <property type="evidence" value="ECO:0007669"/>
    <property type="project" value="InterPro"/>
</dbReference>
<dbReference type="GO" id="GO:0004523">
    <property type="term" value="F:RNA-DNA hybrid ribonuclease activity"/>
    <property type="evidence" value="ECO:0007669"/>
    <property type="project" value="UniProtKB-UniRule"/>
</dbReference>
<dbReference type="GO" id="GO:0043137">
    <property type="term" value="P:DNA replication, removal of RNA primer"/>
    <property type="evidence" value="ECO:0007669"/>
    <property type="project" value="TreeGrafter"/>
</dbReference>
<dbReference type="CDD" id="cd09278">
    <property type="entry name" value="RNase_HI_prokaryote_like"/>
    <property type="match status" value="1"/>
</dbReference>
<dbReference type="FunFam" id="3.30.420.10:FF:000008">
    <property type="entry name" value="Ribonuclease H"/>
    <property type="match status" value="1"/>
</dbReference>
<dbReference type="Gene3D" id="3.30.420.10">
    <property type="entry name" value="Ribonuclease H-like superfamily/Ribonuclease H"/>
    <property type="match status" value="1"/>
</dbReference>
<dbReference type="HAMAP" id="MF_00042">
    <property type="entry name" value="RNase_H"/>
    <property type="match status" value="1"/>
</dbReference>
<dbReference type="InterPro" id="IPR050092">
    <property type="entry name" value="RNase_H"/>
</dbReference>
<dbReference type="InterPro" id="IPR012337">
    <property type="entry name" value="RNaseH-like_sf"/>
</dbReference>
<dbReference type="InterPro" id="IPR002156">
    <property type="entry name" value="RNaseH_domain"/>
</dbReference>
<dbReference type="InterPro" id="IPR036397">
    <property type="entry name" value="RNaseH_sf"/>
</dbReference>
<dbReference type="InterPro" id="IPR022892">
    <property type="entry name" value="RNaseHI"/>
</dbReference>
<dbReference type="NCBIfam" id="NF001236">
    <property type="entry name" value="PRK00203.1"/>
    <property type="match status" value="1"/>
</dbReference>
<dbReference type="PANTHER" id="PTHR10642">
    <property type="entry name" value="RIBONUCLEASE H1"/>
    <property type="match status" value="1"/>
</dbReference>
<dbReference type="PANTHER" id="PTHR10642:SF26">
    <property type="entry name" value="RIBONUCLEASE H1"/>
    <property type="match status" value="1"/>
</dbReference>
<dbReference type="Pfam" id="PF00075">
    <property type="entry name" value="RNase_H"/>
    <property type="match status" value="1"/>
</dbReference>
<dbReference type="SUPFAM" id="SSF53098">
    <property type="entry name" value="Ribonuclease H-like"/>
    <property type="match status" value="1"/>
</dbReference>
<dbReference type="PROSITE" id="PS50879">
    <property type="entry name" value="RNASE_H_1"/>
    <property type="match status" value="1"/>
</dbReference>
<reference key="1">
    <citation type="journal article" date="2000" name="DNA Res.">
        <title>Complete genome structure of the nitrogen-fixing symbiotic bacterium Mesorhizobium loti.</title>
        <authorList>
            <person name="Kaneko T."/>
            <person name="Nakamura Y."/>
            <person name="Sato S."/>
            <person name="Asamizu E."/>
            <person name="Kato T."/>
            <person name="Sasamoto S."/>
            <person name="Watanabe A."/>
            <person name="Idesawa K."/>
            <person name="Ishikawa A."/>
            <person name="Kawashima K."/>
            <person name="Kimura T."/>
            <person name="Kishida Y."/>
            <person name="Kiyokawa C."/>
            <person name="Kohara M."/>
            <person name="Matsumoto M."/>
            <person name="Matsuno A."/>
            <person name="Mochizuki Y."/>
            <person name="Nakayama S."/>
            <person name="Nakazaki N."/>
            <person name="Shimpo S."/>
            <person name="Sugimoto M."/>
            <person name="Takeuchi C."/>
            <person name="Yamada M."/>
            <person name="Tabata S."/>
        </authorList>
    </citation>
    <scope>NUCLEOTIDE SEQUENCE [LARGE SCALE GENOMIC DNA]</scope>
    <source>
        <strain>LMG 29417 / CECT 9101 / MAFF 303099</strain>
    </source>
</reference>
<proteinExistence type="inferred from homology"/>